<evidence type="ECO:0000255" key="1">
    <source>
        <dbReference type="HAMAP-Rule" id="MF_00373"/>
    </source>
</evidence>
<evidence type="ECO:0000305" key="2"/>
<accession>Q74AW5</accession>
<proteinExistence type="inferred from homology"/>
<reference key="1">
    <citation type="journal article" date="2003" name="Science">
        <title>Genome of Geobacter sulfurreducens: metal reduction in subsurface environments.</title>
        <authorList>
            <person name="Methe B.A."/>
            <person name="Nelson K.E."/>
            <person name="Eisen J.A."/>
            <person name="Paulsen I.T."/>
            <person name="Nelson W.C."/>
            <person name="Heidelberg J.F."/>
            <person name="Wu D."/>
            <person name="Wu M."/>
            <person name="Ward N.L."/>
            <person name="Beanan M.J."/>
            <person name="Dodson R.J."/>
            <person name="Madupu R."/>
            <person name="Brinkac L.M."/>
            <person name="Daugherty S.C."/>
            <person name="DeBoy R.T."/>
            <person name="Durkin A.S."/>
            <person name="Gwinn M.L."/>
            <person name="Kolonay J.F."/>
            <person name="Sullivan S.A."/>
            <person name="Haft D.H."/>
            <person name="Selengut J."/>
            <person name="Davidsen T.M."/>
            <person name="Zafar N."/>
            <person name="White O."/>
            <person name="Tran B."/>
            <person name="Romero C."/>
            <person name="Forberger H.A."/>
            <person name="Weidman J.F."/>
            <person name="Khouri H.M."/>
            <person name="Feldblyum T.V."/>
            <person name="Utterback T.R."/>
            <person name="Van Aken S.E."/>
            <person name="Lovley D.R."/>
            <person name="Fraser C.M."/>
        </authorList>
    </citation>
    <scope>NUCLEOTIDE SEQUENCE [LARGE SCALE GENOMIC DNA]</scope>
    <source>
        <strain>ATCC 51573 / DSM 12127 / PCA</strain>
    </source>
</reference>
<sequence>MSKVCEICGKGPSFGNNVSHANNKTRTTWHPNLQKVKAVRNGSVKTIKVCTRCIRSGHVTKAV</sequence>
<organism>
    <name type="scientific">Geobacter sulfurreducens (strain ATCC 51573 / DSM 12127 / PCA)</name>
    <dbReference type="NCBI Taxonomy" id="243231"/>
    <lineage>
        <taxon>Bacteria</taxon>
        <taxon>Pseudomonadati</taxon>
        <taxon>Thermodesulfobacteriota</taxon>
        <taxon>Desulfuromonadia</taxon>
        <taxon>Geobacterales</taxon>
        <taxon>Geobacteraceae</taxon>
        <taxon>Geobacter</taxon>
    </lineage>
</organism>
<protein>
    <recommendedName>
        <fullName evidence="1">Large ribosomal subunit protein bL28</fullName>
    </recommendedName>
    <alternativeName>
        <fullName evidence="2">50S ribosomal protein L28</fullName>
    </alternativeName>
</protein>
<gene>
    <name evidence="1" type="primary">rpmB</name>
    <name type="ordered locus">GSU2234</name>
</gene>
<comment type="similarity">
    <text evidence="1">Belongs to the bacterial ribosomal protein bL28 family.</text>
</comment>
<name>RL28_GEOSL</name>
<dbReference type="EMBL" id="AE017180">
    <property type="protein sequence ID" value="AAR35610.1"/>
    <property type="molecule type" value="Genomic_DNA"/>
</dbReference>
<dbReference type="RefSeq" id="NP_953283.1">
    <property type="nucleotide sequence ID" value="NC_002939.5"/>
</dbReference>
<dbReference type="RefSeq" id="WP_010942874.1">
    <property type="nucleotide sequence ID" value="NC_002939.5"/>
</dbReference>
<dbReference type="SMR" id="Q74AW5"/>
<dbReference type="STRING" id="243231.GSU2234"/>
<dbReference type="EnsemblBacteria" id="AAR35610">
    <property type="protein sequence ID" value="AAR35610"/>
    <property type="gene ID" value="GSU2234"/>
</dbReference>
<dbReference type="KEGG" id="gsu:GSU2234"/>
<dbReference type="PATRIC" id="fig|243231.5.peg.2265"/>
<dbReference type="eggNOG" id="COG0227">
    <property type="taxonomic scope" value="Bacteria"/>
</dbReference>
<dbReference type="HOGENOM" id="CLU_064548_7_0_7"/>
<dbReference type="InParanoid" id="Q74AW5"/>
<dbReference type="OrthoDB" id="9805609at2"/>
<dbReference type="Proteomes" id="UP000000577">
    <property type="component" value="Chromosome"/>
</dbReference>
<dbReference type="GO" id="GO:1990904">
    <property type="term" value="C:ribonucleoprotein complex"/>
    <property type="evidence" value="ECO:0007669"/>
    <property type="project" value="UniProtKB-KW"/>
</dbReference>
<dbReference type="GO" id="GO:0005840">
    <property type="term" value="C:ribosome"/>
    <property type="evidence" value="ECO:0007669"/>
    <property type="project" value="UniProtKB-KW"/>
</dbReference>
<dbReference type="GO" id="GO:0003735">
    <property type="term" value="F:structural constituent of ribosome"/>
    <property type="evidence" value="ECO:0007669"/>
    <property type="project" value="InterPro"/>
</dbReference>
<dbReference type="GO" id="GO:0006412">
    <property type="term" value="P:translation"/>
    <property type="evidence" value="ECO:0007669"/>
    <property type="project" value="UniProtKB-UniRule"/>
</dbReference>
<dbReference type="Gene3D" id="2.20.150.30">
    <property type="match status" value="1"/>
</dbReference>
<dbReference type="Gene3D" id="2.30.170.40">
    <property type="entry name" value="Ribosomal protein L28/L24"/>
    <property type="match status" value="1"/>
</dbReference>
<dbReference type="HAMAP" id="MF_00373">
    <property type="entry name" value="Ribosomal_bL28"/>
    <property type="match status" value="1"/>
</dbReference>
<dbReference type="InterPro" id="IPR050096">
    <property type="entry name" value="Bacterial_rp_bL28"/>
</dbReference>
<dbReference type="InterPro" id="IPR026569">
    <property type="entry name" value="Ribosomal_bL28"/>
</dbReference>
<dbReference type="InterPro" id="IPR034704">
    <property type="entry name" value="Ribosomal_bL28/bL31-like_sf"/>
</dbReference>
<dbReference type="InterPro" id="IPR001383">
    <property type="entry name" value="Ribosomal_bL28_bact-type"/>
</dbReference>
<dbReference type="InterPro" id="IPR037147">
    <property type="entry name" value="Ribosomal_bL28_sf"/>
</dbReference>
<dbReference type="NCBIfam" id="TIGR00009">
    <property type="entry name" value="L28"/>
    <property type="match status" value="1"/>
</dbReference>
<dbReference type="PANTHER" id="PTHR39080">
    <property type="entry name" value="50S RIBOSOMAL PROTEIN L28"/>
    <property type="match status" value="1"/>
</dbReference>
<dbReference type="PANTHER" id="PTHR39080:SF1">
    <property type="entry name" value="LARGE RIBOSOMAL SUBUNIT PROTEIN BL28A"/>
    <property type="match status" value="1"/>
</dbReference>
<dbReference type="Pfam" id="PF00830">
    <property type="entry name" value="Ribosomal_L28"/>
    <property type="match status" value="1"/>
</dbReference>
<dbReference type="SUPFAM" id="SSF143800">
    <property type="entry name" value="L28p-like"/>
    <property type="match status" value="1"/>
</dbReference>
<keyword id="KW-1185">Reference proteome</keyword>
<keyword id="KW-0687">Ribonucleoprotein</keyword>
<keyword id="KW-0689">Ribosomal protein</keyword>
<feature type="chain" id="PRO_0000178476" description="Large ribosomal subunit protein bL28">
    <location>
        <begin position="1"/>
        <end position="63"/>
    </location>
</feature>